<feature type="chain" id="PRO_0000198058" description="Small ribosomal subunit protein eS32">
    <location>
        <begin position="1"/>
        <end position="25"/>
    </location>
</feature>
<feature type="region of interest" description="Disordered" evidence="2">
    <location>
        <begin position="1"/>
        <end position="25"/>
    </location>
</feature>
<dbReference type="EMBL" id="AY115478">
    <property type="protein sequence ID" value="AAM75141.1"/>
    <property type="molecule type" value="Genomic_DNA"/>
</dbReference>
<dbReference type="EMBL" id="AY117540">
    <property type="protein sequence ID" value="AAM77969.1"/>
    <property type="molecule type" value="mRNA"/>
</dbReference>
<dbReference type="EMBL" id="AY117541">
    <property type="protein sequence ID" value="AAM77970.1"/>
    <property type="molecule type" value="mRNA"/>
</dbReference>
<dbReference type="SMR" id="Q6YLX4"/>
<dbReference type="Proteomes" id="UP000694384">
    <property type="component" value="Unplaced"/>
</dbReference>
<dbReference type="Proteomes" id="UP000694427">
    <property type="component" value="Unplaced"/>
</dbReference>
<dbReference type="Proteomes" id="UP000694700">
    <property type="component" value="Unplaced"/>
</dbReference>
<dbReference type="Proteomes" id="UP000694701">
    <property type="component" value="Unplaced"/>
</dbReference>
<dbReference type="Proteomes" id="UP001155660">
    <property type="component" value="Unplaced"/>
</dbReference>
<dbReference type="GO" id="GO:0005737">
    <property type="term" value="C:cytoplasm"/>
    <property type="evidence" value="ECO:0007669"/>
    <property type="project" value="UniProtKB-SubCell"/>
</dbReference>
<dbReference type="GO" id="GO:1990904">
    <property type="term" value="C:ribonucleoprotein complex"/>
    <property type="evidence" value="ECO:0007669"/>
    <property type="project" value="UniProtKB-KW"/>
</dbReference>
<dbReference type="GO" id="GO:0005840">
    <property type="term" value="C:ribosome"/>
    <property type="evidence" value="ECO:0007669"/>
    <property type="project" value="UniProtKB-KW"/>
</dbReference>
<dbReference type="GO" id="GO:0003735">
    <property type="term" value="F:structural constituent of ribosome"/>
    <property type="evidence" value="ECO:0007669"/>
    <property type="project" value="InterPro"/>
</dbReference>
<dbReference type="GO" id="GO:0006412">
    <property type="term" value="P:translation"/>
    <property type="evidence" value="ECO:0007669"/>
    <property type="project" value="InterPro"/>
</dbReference>
<dbReference type="InterPro" id="IPR007836">
    <property type="entry name" value="Ribosomal_eS32"/>
</dbReference>
<dbReference type="Pfam" id="PF05162">
    <property type="entry name" value="Ribosomal_L41"/>
    <property type="match status" value="1"/>
</dbReference>
<gene>
    <name type="primary">rpl41</name>
</gene>
<organism>
    <name type="scientific">Cyprinus carpio</name>
    <name type="common">Common carp</name>
    <dbReference type="NCBI Taxonomy" id="7962"/>
    <lineage>
        <taxon>Eukaryota</taxon>
        <taxon>Metazoa</taxon>
        <taxon>Chordata</taxon>
        <taxon>Craniata</taxon>
        <taxon>Vertebrata</taxon>
        <taxon>Euteleostomi</taxon>
        <taxon>Actinopterygii</taxon>
        <taxon>Neopterygii</taxon>
        <taxon>Teleostei</taxon>
        <taxon>Ostariophysi</taxon>
        <taxon>Cypriniformes</taxon>
        <taxon>Cyprinidae</taxon>
        <taxon>Cyprininae</taxon>
        <taxon>Cyprinus</taxon>
    </lineage>
</organism>
<name>RS32_CYPCA</name>
<accession>Q6YLX4</accession>
<proteinExistence type="evidence at protein level"/>
<evidence type="ECO:0000250" key="1">
    <source>
        <dbReference type="UniProtKB" id="P62947"/>
    </source>
</evidence>
<evidence type="ECO:0000256" key="2">
    <source>
        <dbReference type="SAM" id="MobiDB-lite"/>
    </source>
</evidence>
<evidence type="ECO:0000305" key="3"/>
<evidence type="ECO:0000305" key="4">
    <source ref="2"/>
</evidence>
<protein>
    <recommendedName>
        <fullName evidence="4">Small ribosomal subunit protein eS32</fullName>
    </recommendedName>
    <alternativeName>
        <fullName>60S ribosomal protein L41</fullName>
    </alternativeName>
    <alternativeName>
        <fullName evidence="3">Large ribosomal subunit protein eL41</fullName>
    </alternativeName>
</protein>
<keyword id="KW-0963">Cytoplasm</keyword>
<keyword id="KW-1185">Reference proteome</keyword>
<keyword id="KW-0687">Ribonucleoprotein</keyword>
<keyword id="KW-0689">Ribosomal protein</keyword>
<reference key="1">
    <citation type="journal article" date="2002" name="Biochem. Biophys. Res. Commun.">
        <title>Gene structure of the carp fish ribosomal protein L41: seasonally regulated expression.</title>
        <authorList>
            <person name="Molina A."/>
            <person name="Corta A."/>
            <person name="San Martin R."/>
            <person name="Alvarez M."/>
            <person name="Burzio L.O."/>
            <person name="Krauskopf M."/>
            <person name="Vera M.I."/>
        </authorList>
    </citation>
    <scope>NUCLEOTIDE SEQUENCE</scope>
</reference>
<reference key="2">
    <citation type="unpublished observations" date="2023-10">
        <authorList>
            <person name="Leibundgut M.A."/>
            <person name="Ban N."/>
        </authorList>
    </citation>
    <scope>REVISION OF SUBUNIT</scope>
    <scope>NOMENCLATURE</scope>
</reference>
<comment type="function">
    <text evidence="1 4">Component of the small ribosomal subunit (Probable) (Ref.2). The ribosome is a large ribonucleoprotein complex responsible for the synthesis of proteins in the cell.</text>
</comment>
<comment type="subunit">
    <text evidence="4">Component of the large ribosomal subunit (Ref.2).</text>
</comment>
<comment type="subcellular location">
    <subcellularLocation>
        <location evidence="1">Cytoplasm</location>
    </subcellularLocation>
</comment>
<comment type="miscellaneous">
    <text evidence="4">Initially thought to be part of the large ribosomal subunit. Crystal structures show eS32/eL41 to be a small ribosomal subunit forming a bridge at the interface of the 2 subunits.</text>
</comment>
<comment type="similarity">
    <text evidence="3">Belongs to the eukaryotic ribosomal protein eS32 family.</text>
</comment>
<sequence>MRAKWRKKRMRRLKRKRRKMRQRSK</sequence>